<organism>
    <name type="scientific">Proteus mirabilis (strain HI4320)</name>
    <dbReference type="NCBI Taxonomy" id="529507"/>
    <lineage>
        <taxon>Bacteria</taxon>
        <taxon>Pseudomonadati</taxon>
        <taxon>Pseudomonadota</taxon>
        <taxon>Gammaproteobacteria</taxon>
        <taxon>Enterobacterales</taxon>
        <taxon>Morganellaceae</taxon>
        <taxon>Proteus</taxon>
    </lineage>
</organism>
<accession>B4EZD0</accession>
<keyword id="KW-0997">Cell inner membrane</keyword>
<keyword id="KW-1003">Cell membrane</keyword>
<keyword id="KW-0472">Membrane</keyword>
<keyword id="KW-0520">NAD</keyword>
<keyword id="KW-0874">Quinone</keyword>
<keyword id="KW-1185">Reference proteome</keyword>
<keyword id="KW-1278">Translocase</keyword>
<keyword id="KW-0812">Transmembrane</keyword>
<keyword id="KW-1133">Transmembrane helix</keyword>
<keyword id="KW-0813">Transport</keyword>
<keyword id="KW-0830">Ubiquinone</keyword>
<comment type="function">
    <text evidence="1">NDH-1 shuttles electrons from NADH, via FMN and iron-sulfur (Fe-S) centers, to quinones in the respiratory chain. The immediate electron acceptor for the enzyme in this species is believed to be ubiquinone. Couples the redox reaction to proton translocation (for every two electrons transferred, four hydrogen ions are translocated across the cytoplasmic membrane), and thus conserves the redox energy in a proton gradient.</text>
</comment>
<comment type="catalytic activity">
    <reaction evidence="1">
        <text>a quinone + NADH + 5 H(+)(in) = a quinol + NAD(+) + 4 H(+)(out)</text>
        <dbReference type="Rhea" id="RHEA:57888"/>
        <dbReference type="ChEBI" id="CHEBI:15378"/>
        <dbReference type="ChEBI" id="CHEBI:24646"/>
        <dbReference type="ChEBI" id="CHEBI:57540"/>
        <dbReference type="ChEBI" id="CHEBI:57945"/>
        <dbReference type="ChEBI" id="CHEBI:132124"/>
    </reaction>
</comment>
<comment type="subunit">
    <text evidence="1">NDH-1 is composed of 13 different subunits. Subunits NuoA, H, J, K, L, M, N constitute the membrane sector of the complex.</text>
</comment>
<comment type="subcellular location">
    <subcellularLocation>
        <location evidence="1">Cell inner membrane</location>
        <topology evidence="1">Multi-pass membrane protein</topology>
    </subcellularLocation>
</comment>
<comment type="similarity">
    <text evidence="1">Belongs to the complex I subunit 3 family.</text>
</comment>
<sequence length="150" mass="16605">MSMSTTTEVIAHYWAFAVFLIGALGLCSLMLLGARYLGGRAQARAKHVPYESGLDSVGSARLRMSAKFYLVAMFFVIFDVEALFLYAWAVSVREVGWLGFIEAAVFIAILLAGLFYLVRIGALNWTPVRSRRETAGKSHVRLTSGKHPQQ</sequence>
<proteinExistence type="inferred from homology"/>
<evidence type="ECO:0000255" key="1">
    <source>
        <dbReference type="HAMAP-Rule" id="MF_01394"/>
    </source>
</evidence>
<name>NUOA_PROMH</name>
<protein>
    <recommendedName>
        <fullName evidence="1">NADH-quinone oxidoreductase subunit A</fullName>
        <ecNumber evidence="1">7.1.1.-</ecNumber>
    </recommendedName>
    <alternativeName>
        <fullName evidence="1">NADH dehydrogenase I subunit A</fullName>
    </alternativeName>
    <alternativeName>
        <fullName evidence="1">NDH-1 subunit A</fullName>
    </alternativeName>
    <alternativeName>
        <fullName evidence="1">NUO1</fullName>
    </alternativeName>
</protein>
<gene>
    <name evidence="1" type="primary">nuoA</name>
    <name type="ordered locus">PMI1762</name>
</gene>
<reference key="1">
    <citation type="journal article" date="2008" name="J. Bacteriol.">
        <title>Complete genome sequence of uropathogenic Proteus mirabilis, a master of both adherence and motility.</title>
        <authorList>
            <person name="Pearson M.M."/>
            <person name="Sebaihia M."/>
            <person name="Churcher C."/>
            <person name="Quail M.A."/>
            <person name="Seshasayee A.S."/>
            <person name="Luscombe N.M."/>
            <person name="Abdellah Z."/>
            <person name="Arrosmith C."/>
            <person name="Atkin B."/>
            <person name="Chillingworth T."/>
            <person name="Hauser H."/>
            <person name="Jagels K."/>
            <person name="Moule S."/>
            <person name="Mungall K."/>
            <person name="Norbertczak H."/>
            <person name="Rabbinowitsch E."/>
            <person name="Walker D."/>
            <person name="Whithead S."/>
            <person name="Thomson N.R."/>
            <person name="Rather P.N."/>
            <person name="Parkhill J."/>
            <person name="Mobley H.L.T."/>
        </authorList>
    </citation>
    <scope>NUCLEOTIDE SEQUENCE [LARGE SCALE GENOMIC DNA]</scope>
    <source>
        <strain>HI4320</strain>
    </source>
</reference>
<dbReference type="EC" id="7.1.1.-" evidence="1"/>
<dbReference type="EMBL" id="AM942759">
    <property type="protein sequence ID" value="CAR43668.1"/>
    <property type="molecule type" value="Genomic_DNA"/>
</dbReference>
<dbReference type="RefSeq" id="WP_004243698.1">
    <property type="nucleotide sequence ID" value="NC_010554.1"/>
</dbReference>
<dbReference type="SMR" id="B4EZD0"/>
<dbReference type="EnsemblBacteria" id="CAR43668">
    <property type="protein sequence ID" value="CAR43668"/>
    <property type="gene ID" value="PMI1762"/>
</dbReference>
<dbReference type="GeneID" id="6801558"/>
<dbReference type="KEGG" id="pmr:PMI1762"/>
<dbReference type="eggNOG" id="COG0838">
    <property type="taxonomic scope" value="Bacteria"/>
</dbReference>
<dbReference type="HOGENOM" id="CLU_119549_2_1_6"/>
<dbReference type="Proteomes" id="UP000008319">
    <property type="component" value="Chromosome"/>
</dbReference>
<dbReference type="GO" id="GO:0030964">
    <property type="term" value="C:NADH dehydrogenase complex"/>
    <property type="evidence" value="ECO:0007669"/>
    <property type="project" value="TreeGrafter"/>
</dbReference>
<dbReference type="GO" id="GO:0005886">
    <property type="term" value="C:plasma membrane"/>
    <property type="evidence" value="ECO:0007669"/>
    <property type="project" value="UniProtKB-SubCell"/>
</dbReference>
<dbReference type="GO" id="GO:0008137">
    <property type="term" value="F:NADH dehydrogenase (ubiquinone) activity"/>
    <property type="evidence" value="ECO:0007669"/>
    <property type="project" value="InterPro"/>
</dbReference>
<dbReference type="GO" id="GO:0050136">
    <property type="term" value="F:NADH:ubiquinone reductase (non-electrogenic) activity"/>
    <property type="evidence" value="ECO:0007669"/>
    <property type="project" value="UniProtKB-UniRule"/>
</dbReference>
<dbReference type="GO" id="GO:0048038">
    <property type="term" value="F:quinone binding"/>
    <property type="evidence" value="ECO:0007669"/>
    <property type="project" value="UniProtKB-KW"/>
</dbReference>
<dbReference type="FunFam" id="1.20.58.1610:FF:000003">
    <property type="entry name" value="NADH-quinone oxidoreductase subunit A"/>
    <property type="match status" value="1"/>
</dbReference>
<dbReference type="Gene3D" id="1.20.58.1610">
    <property type="entry name" value="NADH:ubiquinone/plastoquinone oxidoreductase, chain 3"/>
    <property type="match status" value="1"/>
</dbReference>
<dbReference type="HAMAP" id="MF_01394">
    <property type="entry name" value="NDH1_NuoA"/>
    <property type="match status" value="1"/>
</dbReference>
<dbReference type="InterPro" id="IPR023043">
    <property type="entry name" value="NAD(P)H_OxRDtase_bac/plastid"/>
</dbReference>
<dbReference type="InterPro" id="IPR000440">
    <property type="entry name" value="NADH_UbQ/plastoQ_OxRdtase_su3"/>
</dbReference>
<dbReference type="InterPro" id="IPR038430">
    <property type="entry name" value="NDAH_ubi_oxred_su3_sf"/>
</dbReference>
<dbReference type="PANTHER" id="PTHR11058:SF21">
    <property type="entry name" value="NADH-QUINONE OXIDOREDUCTASE SUBUNIT A"/>
    <property type="match status" value="1"/>
</dbReference>
<dbReference type="PANTHER" id="PTHR11058">
    <property type="entry name" value="NADH-UBIQUINONE OXIDOREDUCTASE CHAIN 3"/>
    <property type="match status" value="1"/>
</dbReference>
<dbReference type="Pfam" id="PF00507">
    <property type="entry name" value="Oxidored_q4"/>
    <property type="match status" value="1"/>
</dbReference>
<feature type="chain" id="PRO_0000362732" description="NADH-quinone oxidoreductase subunit A">
    <location>
        <begin position="1"/>
        <end position="150"/>
    </location>
</feature>
<feature type="transmembrane region" description="Helical" evidence="1">
    <location>
        <begin position="14"/>
        <end position="34"/>
    </location>
</feature>
<feature type="transmembrane region" description="Helical" evidence="1">
    <location>
        <begin position="70"/>
        <end position="90"/>
    </location>
</feature>
<feature type="transmembrane region" description="Helical" evidence="1">
    <location>
        <begin position="98"/>
        <end position="118"/>
    </location>
</feature>